<feature type="chain" id="PRO_0000110108" description="Fluoride-specific ion channel FluC">
    <location>
        <begin position="1"/>
        <end position="160"/>
    </location>
</feature>
<feature type="transmembrane region" description="Helical" evidence="1">
    <location>
        <begin position="5"/>
        <end position="25"/>
    </location>
</feature>
<feature type="transmembrane region" description="Helical" evidence="1">
    <location>
        <begin position="34"/>
        <end position="54"/>
    </location>
</feature>
<feature type="transmembrane region" description="Helical" evidence="1">
    <location>
        <begin position="67"/>
        <end position="87"/>
    </location>
</feature>
<feature type="transmembrane region" description="Helical" evidence="1">
    <location>
        <begin position="99"/>
        <end position="119"/>
    </location>
</feature>
<feature type="binding site" evidence="1">
    <location>
        <position position="74"/>
    </location>
    <ligand>
        <name>Na(+)</name>
        <dbReference type="ChEBI" id="CHEBI:29101"/>
        <note>structural</note>
    </ligand>
</feature>
<feature type="binding site" evidence="1">
    <location>
        <position position="77"/>
    </location>
    <ligand>
        <name>Na(+)</name>
        <dbReference type="ChEBI" id="CHEBI:29101"/>
        <note>structural</note>
    </ligand>
</feature>
<sequence>MQALLFISYGAILGASLRWAIGLLFNPLFSSFAFGTLIANLFGCLIIGVLLGLFWQFPQISAEWRLFLITGFLGSLTTFSSFSSEVVELFFNDKWLNGFCVLMMHLFGCLAMTVLGIWIYKICLNFYLNPIHFGFAQLNQQIHRYEIRVIAYIAKFFVSF</sequence>
<organism>
    <name type="scientific">Haemophilus influenzae (strain ATCC 51907 / DSM 11121 / KW20 / Rd)</name>
    <dbReference type="NCBI Taxonomy" id="71421"/>
    <lineage>
        <taxon>Bacteria</taxon>
        <taxon>Pseudomonadati</taxon>
        <taxon>Pseudomonadota</taxon>
        <taxon>Gammaproteobacteria</taxon>
        <taxon>Pasteurellales</taxon>
        <taxon>Pasteurellaceae</taxon>
        <taxon>Haemophilus</taxon>
    </lineage>
</organism>
<gene>
    <name evidence="1" type="primary">fluC</name>
    <name evidence="1" type="synonym">crcB</name>
    <name type="ordered locus">HI_0597.1</name>
</gene>
<accession>P46491</accession>
<dbReference type="EMBL" id="L42023">
    <property type="protein sequence ID" value="AAC22255.1"/>
    <property type="molecule type" value="Genomic_DNA"/>
</dbReference>
<dbReference type="RefSeq" id="NP_438755.1">
    <property type="nucleotide sequence ID" value="NC_000907.1"/>
</dbReference>
<dbReference type="SMR" id="P46491"/>
<dbReference type="STRING" id="71421.HI_0597.1"/>
<dbReference type="EnsemblBacteria" id="AAC22255">
    <property type="protein sequence ID" value="AAC22255"/>
    <property type="gene ID" value="HI_0597.1"/>
</dbReference>
<dbReference type="KEGG" id="hin:HI_0597.1"/>
<dbReference type="PATRIC" id="fig|71421.8.peg.619"/>
<dbReference type="eggNOG" id="COG0239">
    <property type="taxonomic scope" value="Bacteria"/>
</dbReference>
<dbReference type="HOGENOM" id="CLU_114342_3_3_6"/>
<dbReference type="OrthoDB" id="9806299at2"/>
<dbReference type="PhylomeDB" id="P46491"/>
<dbReference type="BioCyc" id="HINF71421:G1GJ1-608-MONOMER"/>
<dbReference type="Proteomes" id="UP000000579">
    <property type="component" value="Chromosome"/>
</dbReference>
<dbReference type="GO" id="GO:0005886">
    <property type="term" value="C:plasma membrane"/>
    <property type="evidence" value="ECO:0000318"/>
    <property type="project" value="GO_Central"/>
</dbReference>
<dbReference type="GO" id="GO:0062054">
    <property type="term" value="F:fluoride channel activity"/>
    <property type="evidence" value="ECO:0007669"/>
    <property type="project" value="UniProtKB-UniRule"/>
</dbReference>
<dbReference type="GO" id="GO:1903425">
    <property type="term" value="F:fluoride transmembrane transporter activity"/>
    <property type="evidence" value="ECO:0000318"/>
    <property type="project" value="GO_Central"/>
</dbReference>
<dbReference type="GO" id="GO:0046872">
    <property type="term" value="F:metal ion binding"/>
    <property type="evidence" value="ECO:0007669"/>
    <property type="project" value="UniProtKB-KW"/>
</dbReference>
<dbReference type="GO" id="GO:0140114">
    <property type="term" value="P:cellular detoxification of fluoride"/>
    <property type="evidence" value="ECO:0007669"/>
    <property type="project" value="UniProtKB-UniRule"/>
</dbReference>
<dbReference type="GO" id="GO:1903424">
    <property type="term" value="P:fluoride transmembrane transport"/>
    <property type="evidence" value="ECO:0000318"/>
    <property type="project" value="GO_Central"/>
</dbReference>
<dbReference type="HAMAP" id="MF_00454">
    <property type="entry name" value="FluC"/>
    <property type="match status" value="1"/>
</dbReference>
<dbReference type="InterPro" id="IPR003691">
    <property type="entry name" value="FluC"/>
</dbReference>
<dbReference type="NCBIfam" id="TIGR00494">
    <property type="entry name" value="crcB"/>
    <property type="match status" value="1"/>
</dbReference>
<dbReference type="NCBIfam" id="NF010792">
    <property type="entry name" value="PRK14196.1"/>
    <property type="match status" value="1"/>
</dbReference>
<dbReference type="PANTHER" id="PTHR28259">
    <property type="entry name" value="FLUORIDE EXPORT PROTEIN 1-RELATED"/>
    <property type="match status" value="1"/>
</dbReference>
<dbReference type="PANTHER" id="PTHR28259:SF1">
    <property type="entry name" value="FLUORIDE EXPORT PROTEIN 1-RELATED"/>
    <property type="match status" value="1"/>
</dbReference>
<dbReference type="Pfam" id="PF02537">
    <property type="entry name" value="CRCB"/>
    <property type="match status" value="1"/>
</dbReference>
<evidence type="ECO:0000255" key="1">
    <source>
        <dbReference type="HAMAP-Rule" id="MF_00454"/>
    </source>
</evidence>
<keyword id="KW-0997">Cell inner membrane</keyword>
<keyword id="KW-1003">Cell membrane</keyword>
<keyword id="KW-0407">Ion channel</keyword>
<keyword id="KW-0406">Ion transport</keyword>
<keyword id="KW-0472">Membrane</keyword>
<keyword id="KW-0479">Metal-binding</keyword>
<keyword id="KW-1185">Reference proteome</keyword>
<keyword id="KW-0915">Sodium</keyword>
<keyword id="KW-0812">Transmembrane</keyword>
<keyword id="KW-1133">Transmembrane helix</keyword>
<keyword id="KW-0813">Transport</keyword>
<protein>
    <recommendedName>
        <fullName evidence="1">Fluoride-specific ion channel FluC</fullName>
    </recommendedName>
</protein>
<reference key="1">
    <citation type="journal article" date="1995" name="Science">
        <title>Whole-genome random sequencing and assembly of Haemophilus influenzae Rd.</title>
        <authorList>
            <person name="Fleischmann R.D."/>
            <person name="Adams M.D."/>
            <person name="White O."/>
            <person name="Clayton R.A."/>
            <person name="Kirkness E.F."/>
            <person name="Kerlavage A.R."/>
            <person name="Bult C.J."/>
            <person name="Tomb J.-F."/>
            <person name="Dougherty B.A."/>
            <person name="Merrick J.M."/>
            <person name="McKenney K."/>
            <person name="Sutton G.G."/>
            <person name="FitzHugh W."/>
            <person name="Fields C.A."/>
            <person name="Gocayne J.D."/>
            <person name="Scott J.D."/>
            <person name="Shirley R."/>
            <person name="Liu L.-I."/>
            <person name="Glodek A."/>
            <person name="Kelley J.M."/>
            <person name="Weidman J.F."/>
            <person name="Phillips C.A."/>
            <person name="Spriggs T."/>
            <person name="Hedblom E."/>
            <person name="Cotton M.D."/>
            <person name="Utterback T.R."/>
            <person name="Hanna M.C."/>
            <person name="Nguyen D.T."/>
            <person name="Saudek D.M."/>
            <person name="Brandon R.C."/>
            <person name="Fine L.D."/>
            <person name="Fritchman J.L."/>
            <person name="Fuhrmann J.L."/>
            <person name="Geoghagen N.S.M."/>
            <person name="Gnehm C.L."/>
            <person name="McDonald L.A."/>
            <person name="Small K.V."/>
            <person name="Fraser C.M."/>
            <person name="Smith H.O."/>
            <person name="Venter J.C."/>
        </authorList>
    </citation>
    <scope>NUCLEOTIDE SEQUENCE [LARGE SCALE GENOMIC DNA]</scope>
    <source>
        <strain>ATCC 51907 / DSM 11121 / KW20 / Rd</strain>
    </source>
</reference>
<reference key="2">
    <citation type="submission" date="1995-09" db="UniProtKB">
        <authorList>
            <person name="Koonin E.V."/>
            <person name="Rudd K.E."/>
        </authorList>
    </citation>
    <scope>IDENTIFICATION</scope>
</reference>
<comment type="function">
    <text evidence="1">Fluoride-specific ion channel. Important for reducing fluoride concentration in the cell, thus reducing its toxicity.</text>
</comment>
<comment type="catalytic activity">
    <reaction evidence="1">
        <text>fluoride(in) = fluoride(out)</text>
        <dbReference type="Rhea" id="RHEA:76159"/>
        <dbReference type="ChEBI" id="CHEBI:17051"/>
    </reaction>
    <physiologicalReaction direction="left-to-right" evidence="1">
        <dbReference type="Rhea" id="RHEA:76160"/>
    </physiologicalReaction>
</comment>
<comment type="activity regulation">
    <text evidence="1">Na(+) is not transported, but it plays an essential structural role and its presence is essential for fluoride channel function.</text>
</comment>
<comment type="subcellular location">
    <subcellularLocation>
        <location evidence="1">Cell inner membrane</location>
        <topology evidence="1">Multi-pass membrane protein</topology>
    </subcellularLocation>
</comment>
<comment type="similarity">
    <text evidence="1">Belongs to the fluoride channel Fluc/FEX (TC 1.A.43) family.</text>
</comment>
<name>FLUC_HAEIN</name>
<proteinExistence type="inferred from homology"/>